<proteinExistence type="inferred from homology"/>
<evidence type="ECO:0000255" key="1">
    <source>
        <dbReference type="HAMAP-Rule" id="MF_01337"/>
    </source>
</evidence>
<evidence type="ECO:0000305" key="2"/>
<sequence>MSKQNELNARRKQRVRARIKKYGSGRPRLSVFRSSKHIYAQIIDDTAGHTLAAASSLDKDLREGLKTGADIDAAKAVGKLIAERATAKGVTAVVFDRGAYLFHGRVKALADAAREAGLQF</sequence>
<organism>
    <name type="scientific">Rhodospirillum centenum (strain ATCC 51521 / SW)</name>
    <dbReference type="NCBI Taxonomy" id="414684"/>
    <lineage>
        <taxon>Bacteria</taxon>
        <taxon>Pseudomonadati</taxon>
        <taxon>Pseudomonadota</taxon>
        <taxon>Alphaproteobacteria</taxon>
        <taxon>Rhodospirillales</taxon>
        <taxon>Rhodospirillaceae</taxon>
        <taxon>Rhodospirillum</taxon>
    </lineage>
</organism>
<accession>B6IRS2</accession>
<gene>
    <name evidence="1" type="primary">rplR</name>
    <name type="ordered locus">RC1_0727</name>
</gene>
<comment type="function">
    <text evidence="1">This is one of the proteins that bind and probably mediate the attachment of the 5S RNA into the large ribosomal subunit, where it forms part of the central protuberance.</text>
</comment>
<comment type="subunit">
    <text evidence="1">Part of the 50S ribosomal subunit; part of the 5S rRNA/L5/L18/L25 subcomplex. Contacts the 5S and 23S rRNAs.</text>
</comment>
<comment type="similarity">
    <text evidence="1">Belongs to the universal ribosomal protein uL18 family.</text>
</comment>
<feature type="chain" id="PRO_1000142709" description="Large ribosomal subunit protein uL18">
    <location>
        <begin position="1"/>
        <end position="120"/>
    </location>
</feature>
<protein>
    <recommendedName>
        <fullName evidence="1">Large ribosomal subunit protein uL18</fullName>
    </recommendedName>
    <alternativeName>
        <fullName evidence="2">50S ribosomal protein L18</fullName>
    </alternativeName>
</protein>
<name>RL18_RHOCS</name>
<reference key="1">
    <citation type="submission" date="2007-03" db="EMBL/GenBank/DDBJ databases">
        <title>Genome sequence of Rhodospirillum centenum.</title>
        <authorList>
            <person name="Touchman J.W."/>
            <person name="Bauer C."/>
            <person name="Blankenship R.E."/>
        </authorList>
    </citation>
    <scope>NUCLEOTIDE SEQUENCE [LARGE SCALE GENOMIC DNA]</scope>
    <source>
        <strain>ATCC 51521 / SW</strain>
    </source>
</reference>
<keyword id="KW-1185">Reference proteome</keyword>
<keyword id="KW-0687">Ribonucleoprotein</keyword>
<keyword id="KW-0689">Ribosomal protein</keyword>
<keyword id="KW-0694">RNA-binding</keyword>
<keyword id="KW-0699">rRNA-binding</keyword>
<dbReference type="EMBL" id="CP000613">
    <property type="protein sequence ID" value="ACI98158.1"/>
    <property type="molecule type" value="Genomic_DNA"/>
</dbReference>
<dbReference type="RefSeq" id="WP_012565949.1">
    <property type="nucleotide sequence ID" value="NC_011420.2"/>
</dbReference>
<dbReference type="SMR" id="B6IRS2"/>
<dbReference type="STRING" id="414684.RC1_0727"/>
<dbReference type="KEGG" id="rce:RC1_0727"/>
<dbReference type="eggNOG" id="COG0256">
    <property type="taxonomic scope" value="Bacteria"/>
</dbReference>
<dbReference type="HOGENOM" id="CLU_098841_0_1_5"/>
<dbReference type="OrthoDB" id="9810939at2"/>
<dbReference type="Proteomes" id="UP000001591">
    <property type="component" value="Chromosome"/>
</dbReference>
<dbReference type="GO" id="GO:0022625">
    <property type="term" value="C:cytosolic large ribosomal subunit"/>
    <property type="evidence" value="ECO:0007669"/>
    <property type="project" value="TreeGrafter"/>
</dbReference>
<dbReference type="GO" id="GO:0008097">
    <property type="term" value="F:5S rRNA binding"/>
    <property type="evidence" value="ECO:0007669"/>
    <property type="project" value="TreeGrafter"/>
</dbReference>
<dbReference type="GO" id="GO:0003735">
    <property type="term" value="F:structural constituent of ribosome"/>
    <property type="evidence" value="ECO:0007669"/>
    <property type="project" value="InterPro"/>
</dbReference>
<dbReference type="GO" id="GO:0006412">
    <property type="term" value="P:translation"/>
    <property type="evidence" value="ECO:0007669"/>
    <property type="project" value="UniProtKB-UniRule"/>
</dbReference>
<dbReference type="CDD" id="cd00432">
    <property type="entry name" value="Ribosomal_L18_L5e"/>
    <property type="match status" value="1"/>
</dbReference>
<dbReference type="FunFam" id="3.30.420.100:FF:000001">
    <property type="entry name" value="50S ribosomal protein L18"/>
    <property type="match status" value="1"/>
</dbReference>
<dbReference type="Gene3D" id="3.30.420.100">
    <property type="match status" value="1"/>
</dbReference>
<dbReference type="HAMAP" id="MF_01337_B">
    <property type="entry name" value="Ribosomal_uL18_B"/>
    <property type="match status" value="1"/>
</dbReference>
<dbReference type="InterPro" id="IPR004389">
    <property type="entry name" value="Ribosomal_uL18_bac-type"/>
</dbReference>
<dbReference type="InterPro" id="IPR005484">
    <property type="entry name" value="Ribosomal_uL18_bac/euk"/>
</dbReference>
<dbReference type="NCBIfam" id="TIGR00060">
    <property type="entry name" value="L18_bact"/>
    <property type="match status" value="1"/>
</dbReference>
<dbReference type="PANTHER" id="PTHR12899">
    <property type="entry name" value="39S RIBOSOMAL PROTEIN L18, MITOCHONDRIAL"/>
    <property type="match status" value="1"/>
</dbReference>
<dbReference type="PANTHER" id="PTHR12899:SF3">
    <property type="entry name" value="LARGE RIBOSOMAL SUBUNIT PROTEIN UL18M"/>
    <property type="match status" value="1"/>
</dbReference>
<dbReference type="Pfam" id="PF00861">
    <property type="entry name" value="Ribosomal_L18p"/>
    <property type="match status" value="1"/>
</dbReference>
<dbReference type="SUPFAM" id="SSF53137">
    <property type="entry name" value="Translational machinery components"/>
    <property type="match status" value="1"/>
</dbReference>